<gene>
    <name evidence="1" type="primary">mukF</name>
    <name type="ordered locus">Spro_1723</name>
</gene>
<organism>
    <name type="scientific">Serratia proteamaculans (strain 568)</name>
    <dbReference type="NCBI Taxonomy" id="399741"/>
    <lineage>
        <taxon>Bacteria</taxon>
        <taxon>Pseudomonadati</taxon>
        <taxon>Pseudomonadota</taxon>
        <taxon>Gammaproteobacteria</taxon>
        <taxon>Enterobacterales</taxon>
        <taxon>Yersiniaceae</taxon>
        <taxon>Serratia</taxon>
    </lineage>
</organism>
<comment type="function">
    <text evidence="1">Involved in chromosome condensation, segregation and cell cycle progression. May participate in facilitating chromosome segregation by condensation DNA from both sides of a centrally located replisome during cell division. Not required for mini-F plasmid partitioning. Probably acts via its interaction with MukB and MukE. Overexpression results in anucleate cells. It has a calcium binding activity.</text>
</comment>
<comment type="subunit">
    <text evidence="1">Interacts, and probably forms a ternary complex, with MukE and MukB via its C-terminal region. The complex formation is stimulated by calcium or magnesium. It is required for an interaction between MukE and MukB.</text>
</comment>
<comment type="subcellular location">
    <subcellularLocation>
        <location evidence="1">Cytoplasm</location>
        <location evidence="1">Nucleoid</location>
    </subcellularLocation>
    <text evidence="1">Restricted to the nucleoid region.</text>
</comment>
<comment type="similarity">
    <text evidence="1">Belongs to the MukF family.</text>
</comment>
<name>MUKF_SERP5</name>
<reference key="1">
    <citation type="submission" date="2007-09" db="EMBL/GenBank/DDBJ databases">
        <title>Complete sequence of chromosome of Serratia proteamaculans 568.</title>
        <authorList>
            <consortium name="US DOE Joint Genome Institute"/>
            <person name="Copeland A."/>
            <person name="Lucas S."/>
            <person name="Lapidus A."/>
            <person name="Barry K."/>
            <person name="Glavina del Rio T."/>
            <person name="Dalin E."/>
            <person name="Tice H."/>
            <person name="Pitluck S."/>
            <person name="Chain P."/>
            <person name="Malfatti S."/>
            <person name="Shin M."/>
            <person name="Vergez L."/>
            <person name="Schmutz J."/>
            <person name="Larimer F."/>
            <person name="Land M."/>
            <person name="Hauser L."/>
            <person name="Kyrpides N."/>
            <person name="Kim E."/>
            <person name="Taghavi S."/>
            <person name="Newman L."/>
            <person name="Vangronsveld J."/>
            <person name="van der Lelie D."/>
            <person name="Richardson P."/>
        </authorList>
    </citation>
    <scope>NUCLEOTIDE SEQUENCE [LARGE SCALE GENOMIC DNA]</scope>
    <source>
        <strain>568</strain>
    </source>
</reference>
<accession>A8GCI7</accession>
<protein>
    <recommendedName>
        <fullName evidence="1">Chromosome partition protein MukF</fullName>
    </recommendedName>
</protein>
<keyword id="KW-0106">Calcium</keyword>
<keyword id="KW-0131">Cell cycle</keyword>
<keyword id="KW-0132">Cell division</keyword>
<keyword id="KW-0159">Chromosome partition</keyword>
<keyword id="KW-0963">Cytoplasm</keyword>
<keyword id="KW-0226">DNA condensation</keyword>
<proteinExistence type="inferred from homology"/>
<sequence length="440" mass="50110">MSEFSQTVPELVAWARKNDFSISLPTERLAFLLAIATLNGERLDGEMSEGELVDAFRHVSKGFEQTHETVAVRANNAINDMVRQRLLNRFISELADGNAIYRLTPLGIGITDYYIRQREFSTLRLSMQLSIVAQELKRAADAADEGGDDFHWHRNVFAPLKYSVAEIFDSIDLTQRIMDEQQQGVKDDIAALLNKDWRAAISSCEMLLSETSGTLRELQDTLEAAGDKLQANLLRIQDATLGGAELGFIDKLVFDLQSKLDRIISWGQQAIDLWIGYDRHVHKFIRTAIDMDKNRVFAQRLRQSVQNYFDNPWTLTHANADRLLDMRDEELALRSEEVTGELPPDLEFEEFSEIREQLAAMIEQALKIYQEQQMPLNLGAVMRDYLAQYPRARHFDVARLVVDQAVRLGVAEADFSGLPAQWQAINDYGAKVQAHVIDKY</sequence>
<feature type="chain" id="PRO_1000069939" description="Chromosome partition protein MukF">
    <location>
        <begin position="1"/>
        <end position="440"/>
    </location>
</feature>
<feature type="region of interest" description="Leucine-zipper">
    <location>
        <begin position="208"/>
        <end position="236"/>
    </location>
</feature>
<evidence type="ECO:0000255" key="1">
    <source>
        <dbReference type="HAMAP-Rule" id="MF_01803"/>
    </source>
</evidence>
<dbReference type="EMBL" id="CP000826">
    <property type="protein sequence ID" value="ABV40827.1"/>
    <property type="molecule type" value="Genomic_DNA"/>
</dbReference>
<dbReference type="SMR" id="A8GCI7"/>
<dbReference type="STRING" id="399741.Spro_1723"/>
<dbReference type="KEGG" id="spe:Spro_1723"/>
<dbReference type="eggNOG" id="COG3006">
    <property type="taxonomic scope" value="Bacteria"/>
</dbReference>
<dbReference type="HOGENOM" id="CLU_049853_0_0_6"/>
<dbReference type="OrthoDB" id="6450805at2"/>
<dbReference type="GO" id="GO:0005737">
    <property type="term" value="C:cytoplasm"/>
    <property type="evidence" value="ECO:0007669"/>
    <property type="project" value="UniProtKB-UniRule"/>
</dbReference>
<dbReference type="GO" id="GO:0009295">
    <property type="term" value="C:nucleoid"/>
    <property type="evidence" value="ECO:0007669"/>
    <property type="project" value="UniProtKB-SubCell"/>
</dbReference>
<dbReference type="GO" id="GO:0005509">
    <property type="term" value="F:calcium ion binding"/>
    <property type="evidence" value="ECO:0007669"/>
    <property type="project" value="UniProtKB-UniRule"/>
</dbReference>
<dbReference type="GO" id="GO:0051301">
    <property type="term" value="P:cell division"/>
    <property type="evidence" value="ECO:0007669"/>
    <property type="project" value="UniProtKB-KW"/>
</dbReference>
<dbReference type="GO" id="GO:0030261">
    <property type="term" value="P:chromosome condensation"/>
    <property type="evidence" value="ECO:0007669"/>
    <property type="project" value="UniProtKB-KW"/>
</dbReference>
<dbReference type="GO" id="GO:0007059">
    <property type="term" value="P:chromosome segregation"/>
    <property type="evidence" value="ECO:0007669"/>
    <property type="project" value="UniProtKB-UniRule"/>
</dbReference>
<dbReference type="GO" id="GO:0006260">
    <property type="term" value="P:DNA replication"/>
    <property type="evidence" value="ECO:0007669"/>
    <property type="project" value="UniProtKB-UniRule"/>
</dbReference>
<dbReference type="CDD" id="cd16337">
    <property type="entry name" value="MukF_C"/>
    <property type="match status" value="1"/>
</dbReference>
<dbReference type="CDD" id="cd16335">
    <property type="entry name" value="MukF_N"/>
    <property type="match status" value="1"/>
</dbReference>
<dbReference type="Gene3D" id="1.20.58.590">
    <property type="entry name" value="Chromosome partition protein MukF, middle domain"/>
    <property type="match status" value="1"/>
</dbReference>
<dbReference type="Gene3D" id="1.10.225.40">
    <property type="entry name" value="MukF, C-terminal domain"/>
    <property type="match status" value="1"/>
</dbReference>
<dbReference type="Gene3D" id="1.10.10.10">
    <property type="entry name" value="Winged helix-like DNA-binding domain superfamily/Winged helix DNA-binding domain"/>
    <property type="match status" value="1"/>
</dbReference>
<dbReference type="HAMAP" id="MF_01803">
    <property type="entry name" value="MukF"/>
    <property type="match status" value="1"/>
</dbReference>
<dbReference type="InterPro" id="IPR005582">
    <property type="entry name" value="Chromosome_partition_MukF"/>
</dbReference>
<dbReference type="InterPro" id="IPR033441">
    <property type="entry name" value="MukF_C"/>
</dbReference>
<dbReference type="InterPro" id="IPR038198">
    <property type="entry name" value="MukF_C_sf"/>
</dbReference>
<dbReference type="InterPro" id="IPR033440">
    <property type="entry name" value="MukF_M"/>
</dbReference>
<dbReference type="InterPro" id="IPR036141">
    <property type="entry name" value="MukF_M_sp"/>
</dbReference>
<dbReference type="InterPro" id="IPR033439">
    <property type="entry name" value="MukF_WHTH"/>
</dbReference>
<dbReference type="InterPro" id="IPR036388">
    <property type="entry name" value="WH-like_DNA-bd_sf"/>
</dbReference>
<dbReference type="InterPro" id="IPR036390">
    <property type="entry name" value="WH_DNA-bd_sf"/>
</dbReference>
<dbReference type="NCBIfam" id="NF003615">
    <property type="entry name" value="PRK05260.1"/>
    <property type="match status" value="1"/>
</dbReference>
<dbReference type="Pfam" id="PF03882">
    <property type="entry name" value="KicB"/>
    <property type="match status" value="1"/>
</dbReference>
<dbReference type="Pfam" id="PF17193">
    <property type="entry name" value="MukF_C"/>
    <property type="match status" value="1"/>
</dbReference>
<dbReference type="Pfam" id="PF17192">
    <property type="entry name" value="MukF_M"/>
    <property type="match status" value="1"/>
</dbReference>
<dbReference type="PIRSF" id="PIRSF018282">
    <property type="entry name" value="MukF"/>
    <property type="match status" value="1"/>
</dbReference>
<dbReference type="SUPFAM" id="SSF140570">
    <property type="entry name" value="MukF C-terminal domain-like"/>
    <property type="match status" value="1"/>
</dbReference>
<dbReference type="SUPFAM" id="SSF46785">
    <property type="entry name" value="Winged helix' DNA-binding domain"/>
    <property type="match status" value="1"/>
</dbReference>